<comment type="function">
    <text evidence="1">Inhibits post-transcriptional processing of cellular pre-mRNA, by binding and inhibiting two cellular proteins that are required for the 3'-end processing of cellular pre-mRNAs: the 30 kDa cleavage and polyadenylation specificity factor/CPSF4 and the poly(A)-binding protein 2/PABPN1. In turn, unprocessed 3' end pre-mRNAs accumulate in the host nucleus and are no longer exported to the cytoplasm. Cellular protein synthesis is thereby shut off very early after virus infection. Viral protein synthesis is not affected by the inhibition of the cellular 3' end processing machinery because the poly(A) tails of viral mRNAs are produced by the viral polymerase through a stuttering mechanism. Prevents the establishment of the cellular antiviral state by inhibiting TRIM25-mediated RIGI ubiquitination, which normally triggers the antiviral transduction signal that leads to the activation of type I IFN genes by transcription factors IRF3 and IRF7. Also binds poly(A) and U6 snRNA. Inhibits the integrated stress response (ISR) in the infected cell by blocking dsRNA binding by EIF2AK2/PKR and further phosphorylation of EIF2S1/EIF-2ALPHA. Stress granule formation is thus inhibited, which allows protein synthesis and viral replication.</text>
</comment>
<comment type="subunit">
    <text evidence="1">Homodimer. Interacts with host TRIM25 (via coiled coil); this interaction specifically inhibits TRIM25 multimerization and TRIM25-mediated RIGI CARD ubiquitination. Interacts with human EIF2AK2/PKR, CPSF4, IVNS1ABP and PABPN1.</text>
</comment>
<comment type="subcellular location">
    <subcellularLocation>
        <location evidence="1">Host nucleus</location>
    </subcellularLocation>
    <subcellularLocation>
        <location evidence="1">Host cytoplasm</location>
    </subcellularLocation>
    <text evidence="1">In uninfected, transfected cells, NS1 is localized in the nucleus. Only in virus infected cells, the nuclear export signal is unveiled, presumably by a viral protein, and a fraction of NS1 is exported in the cytoplasm.</text>
</comment>
<comment type="alternative products">
    <event type="alternative splicing"/>
    <isoform>
        <id>A4GCM5-1</id>
        <name>NS1</name>
        <sequence type="displayed"/>
    </isoform>
    <isoform>
        <id>A4GCM4-1</id>
        <name>NEP</name>
        <name>NS2</name>
        <sequence type="external"/>
    </isoform>
</comment>
<comment type="domain">
    <text evidence="1">The dsRNA-binding region is required for suppression of RNA silencing.</text>
</comment>
<comment type="PTM">
    <text evidence="1">Upon interferon induction, ISGylated via host HERC5; this results in the impairment of NS1 interaction with RNA targets due to its inability to form homodimers and to interact with host EIF2AK2/PKR.</text>
</comment>
<comment type="similarity">
    <text evidence="1">Belongs to the influenza A viruses NS1 family.</text>
</comment>
<reference key="1">
    <citation type="submission" date="2007-03" db="EMBL/GenBank/DDBJ databases">
        <title>The NIAID influenza genome sequencing project.</title>
        <authorList>
            <person name="Ghedin E."/>
            <person name="Spiro D."/>
            <person name="Miller N."/>
            <person name="Zaborsky J."/>
            <person name="Feldblyum T."/>
            <person name="Subbu V."/>
            <person name="Shumway M."/>
            <person name="Sparenborg J."/>
            <person name="Groveman L."/>
            <person name="Halpin R."/>
            <person name="Sitz J."/>
            <person name="Koo H."/>
            <person name="Salzberg S.L."/>
            <person name="Webster R.G."/>
            <person name="Hoffmann E."/>
            <person name="Krauss S."/>
            <person name="Naeve C."/>
            <person name="Bao Y."/>
            <person name="Bolotov P."/>
            <person name="Dernovoy D."/>
            <person name="Kiryutin B."/>
            <person name="Lipman D.J."/>
            <person name="Tatusova T."/>
        </authorList>
    </citation>
    <scope>NUCLEOTIDE SEQUENCE [GENOMIC RNA]</scope>
</reference>
<reference key="2">
    <citation type="submission" date="2007-03" db="EMBL/GenBank/DDBJ databases">
        <authorList>
            <consortium name="The NIAID Influenza Genome Sequencing Consortium"/>
        </authorList>
    </citation>
    <scope>NUCLEOTIDE SEQUENCE [GENOMIC RNA]</scope>
</reference>
<proteinExistence type="inferred from homology"/>
<sequence length="230" mass="26002">MDPNTVSSFQVDCFLWHVRKRVADQELGDAPFLDRLRRDQKSLKGRGSTLGLDIETATRAGKQIVERILKEESDEALKMTMASVPASRYLTDMTLEEMSRDWFMLRPKQKVAGPLCIRMDQAIMDKDIILKANFSVIFDRLETLILLRAFTEEGAIVGEISPLPSLPGHTDEDVKNAIGVLIGGLEWNDNTVRVSETLQRFAWRSSNENGRPPLTPKQKREMAGTIRSEV</sequence>
<organismHost>
    <name type="scientific">Aves</name>
    <dbReference type="NCBI Taxonomy" id="8782"/>
</organismHost>
<organismHost>
    <name type="scientific">Homo sapiens</name>
    <name type="common">Human</name>
    <dbReference type="NCBI Taxonomy" id="9606"/>
</organismHost>
<organismHost>
    <name type="scientific">Sus scrofa</name>
    <name type="common">Pig</name>
    <dbReference type="NCBI Taxonomy" id="9823"/>
</organismHost>
<gene>
    <name evidence="1" type="primary">NS</name>
</gene>
<keyword id="KW-0025">Alternative splicing</keyword>
<keyword id="KW-1262">Eukaryotic host gene expression shutoff by virus</keyword>
<keyword id="KW-1035">Host cytoplasm</keyword>
<keyword id="KW-1190">Host gene expression shutoff by virus</keyword>
<keyword id="KW-1192">Host mRNA suppression by virus</keyword>
<keyword id="KW-1048">Host nucleus</keyword>
<keyword id="KW-0945">Host-virus interaction</keyword>
<keyword id="KW-1090">Inhibition of host innate immune response by virus</keyword>
<keyword id="KW-1114">Inhibition of host interferon signaling pathway by virus</keyword>
<keyword id="KW-1102">Inhibition of host PKR by virus</keyword>
<keyword id="KW-1103">Inhibition of host pre-mRNA processing by virus</keyword>
<keyword id="KW-1088">Inhibition of host RIG-I by virus</keyword>
<keyword id="KW-1113">Inhibition of host RLR pathway by virus</keyword>
<keyword id="KW-0922">Interferon antiviral system evasion</keyword>
<keyword id="KW-0694">RNA-binding</keyword>
<keyword id="KW-0832">Ubl conjugation</keyword>
<keyword id="KW-0899">Viral immunoevasion</keyword>
<evidence type="ECO:0000255" key="1">
    <source>
        <dbReference type="HAMAP-Rule" id="MF_04066"/>
    </source>
</evidence>
<evidence type="ECO:0000256" key="2">
    <source>
        <dbReference type="SAM" id="MobiDB-lite"/>
    </source>
</evidence>
<dbReference type="EMBL" id="CY020473">
    <property type="protein sequence ID" value="ABO38389.1"/>
    <property type="molecule type" value="Viral_cRNA"/>
</dbReference>
<dbReference type="SMR" id="A4GCM5"/>
<dbReference type="Proteomes" id="UP000000829">
    <property type="component" value="Genome"/>
</dbReference>
<dbReference type="GO" id="GO:0030430">
    <property type="term" value="C:host cell cytoplasm"/>
    <property type="evidence" value="ECO:0007669"/>
    <property type="project" value="UniProtKB-SubCell"/>
</dbReference>
<dbReference type="GO" id="GO:0042025">
    <property type="term" value="C:host cell nucleus"/>
    <property type="evidence" value="ECO:0007669"/>
    <property type="project" value="UniProtKB-SubCell"/>
</dbReference>
<dbReference type="GO" id="GO:0030291">
    <property type="term" value="F:protein serine/threonine kinase inhibitor activity"/>
    <property type="evidence" value="ECO:0007669"/>
    <property type="project" value="UniProtKB-KW"/>
</dbReference>
<dbReference type="GO" id="GO:0003723">
    <property type="term" value="F:RNA binding"/>
    <property type="evidence" value="ECO:0007669"/>
    <property type="project" value="UniProtKB-KW"/>
</dbReference>
<dbReference type="GO" id="GO:0039540">
    <property type="term" value="P:symbiont-mediated suppression of host cytoplasmic pattern recognition receptor signaling pathway via inhibition of RIG-I activity"/>
    <property type="evidence" value="ECO:0007669"/>
    <property type="project" value="UniProtKB-KW"/>
</dbReference>
<dbReference type="GO" id="GO:0039657">
    <property type="term" value="P:symbiont-mediated suppression of host gene expression"/>
    <property type="evidence" value="ECO:0007669"/>
    <property type="project" value="UniProtKB-KW"/>
</dbReference>
<dbReference type="GO" id="GO:0039524">
    <property type="term" value="P:symbiont-mediated suppression of host mRNA processing"/>
    <property type="evidence" value="ECO:0007669"/>
    <property type="project" value="UniProtKB-KW"/>
</dbReference>
<dbReference type="GO" id="GO:0039580">
    <property type="term" value="P:symbiont-mediated suppression of host PKR/eIFalpha signaling"/>
    <property type="evidence" value="ECO:0007669"/>
    <property type="project" value="UniProtKB-KW"/>
</dbReference>
<dbReference type="GO" id="GO:0039502">
    <property type="term" value="P:symbiont-mediated suppression of host type I interferon-mediated signaling pathway"/>
    <property type="evidence" value="ECO:0007669"/>
    <property type="project" value="UniProtKB-KW"/>
</dbReference>
<dbReference type="FunFam" id="1.10.287.10:FF:000001">
    <property type="entry name" value="Non-structural protein 1"/>
    <property type="match status" value="1"/>
</dbReference>
<dbReference type="FunFam" id="3.30.420.330:FF:000001">
    <property type="entry name" value="Non-structural protein 1"/>
    <property type="match status" value="1"/>
</dbReference>
<dbReference type="Gene3D" id="3.30.420.330">
    <property type="entry name" value="Influenza virus non-structural protein, effector domain"/>
    <property type="match status" value="1"/>
</dbReference>
<dbReference type="Gene3D" id="1.10.287.10">
    <property type="entry name" value="S15/NS1, RNA-binding"/>
    <property type="match status" value="1"/>
</dbReference>
<dbReference type="HAMAP" id="MF_04066">
    <property type="entry name" value="INFV_NS1"/>
    <property type="match status" value="1"/>
</dbReference>
<dbReference type="InterPro" id="IPR004208">
    <property type="entry name" value="NS1"/>
</dbReference>
<dbReference type="InterPro" id="IPR000256">
    <property type="entry name" value="NS1A"/>
</dbReference>
<dbReference type="InterPro" id="IPR038064">
    <property type="entry name" value="NS1A_effect_dom-like_sf"/>
</dbReference>
<dbReference type="InterPro" id="IPR009068">
    <property type="entry name" value="uS15_NS1_RNA-bd_sf"/>
</dbReference>
<dbReference type="Pfam" id="PF00600">
    <property type="entry name" value="Flu_NS1"/>
    <property type="match status" value="1"/>
</dbReference>
<dbReference type="SUPFAM" id="SSF143021">
    <property type="entry name" value="Ns1 effector domain-like"/>
    <property type="match status" value="1"/>
</dbReference>
<dbReference type="SUPFAM" id="SSF47060">
    <property type="entry name" value="S15/NS1 RNA-binding domain"/>
    <property type="match status" value="1"/>
</dbReference>
<name>NS1_I35A3</name>
<accession>A4GCM5</accession>
<protein>
    <recommendedName>
        <fullName evidence="1">Non-structural protein 1</fullName>
        <shortName evidence="1">NS1</shortName>
    </recommendedName>
    <alternativeName>
        <fullName evidence="1">NS1A</fullName>
    </alternativeName>
</protein>
<feature type="chain" id="PRO_0000372980" description="Non-structural protein 1">
    <location>
        <begin position="1"/>
        <end position="230"/>
    </location>
</feature>
<feature type="region of interest" description="RNA-binding and homodimerization" evidence="1">
    <location>
        <begin position="1"/>
        <end position="73"/>
    </location>
</feature>
<feature type="region of interest" description="CPSF4-binding" evidence="1">
    <location>
        <begin position="180"/>
        <end position="215"/>
    </location>
</feature>
<feature type="region of interest" description="Disordered" evidence="2">
    <location>
        <begin position="205"/>
        <end position="230"/>
    </location>
</feature>
<feature type="region of interest" description="PABPN1-binding" evidence="1">
    <location>
        <begin position="223"/>
        <end position="230"/>
    </location>
</feature>
<feature type="short sequence motif" description="Nuclear localization signal" evidence="1">
    <location>
        <begin position="34"/>
        <end position="38"/>
    </location>
</feature>
<feature type="short sequence motif" description="Nuclear export signal" evidence="1">
    <location>
        <begin position="137"/>
        <end position="146"/>
    </location>
</feature>
<feature type="compositionally biased region" description="Basic and acidic residues" evidence="2">
    <location>
        <begin position="218"/>
        <end position="230"/>
    </location>
</feature>
<organism>
    <name type="scientific">Influenza A virus (strain A/USA:Phila/1935 H1N1)</name>
    <dbReference type="NCBI Taxonomy" id="425570"/>
    <lineage>
        <taxon>Viruses</taxon>
        <taxon>Riboviria</taxon>
        <taxon>Orthornavirae</taxon>
        <taxon>Negarnaviricota</taxon>
        <taxon>Polyploviricotina</taxon>
        <taxon>Insthoviricetes</taxon>
        <taxon>Articulavirales</taxon>
        <taxon>Orthomyxoviridae</taxon>
        <taxon>Alphainfluenzavirus</taxon>
        <taxon>Alphainfluenzavirus influenzae</taxon>
        <taxon>Influenza A virus</taxon>
    </lineage>
</organism>